<keyword id="KW-0067">ATP-binding</keyword>
<keyword id="KW-0131">Cell cycle</keyword>
<keyword id="KW-0132">Cell division</keyword>
<keyword id="KW-0133">Cell shape</keyword>
<keyword id="KW-0961">Cell wall biogenesis/degradation</keyword>
<keyword id="KW-0963">Cytoplasm</keyword>
<keyword id="KW-0436">Ligase</keyword>
<keyword id="KW-0547">Nucleotide-binding</keyword>
<keyword id="KW-0573">Peptidoglycan synthesis</keyword>
<keyword id="KW-1185">Reference proteome</keyword>
<accession>Q2G997</accession>
<gene>
    <name evidence="1" type="primary">murD</name>
    <name type="ordered locus">Saro_1131</name>
</gene>
<comment type="function">
    <text evidence="1">Cell wall formation. Catalyzes the addition of glutamate to the nucleotide precursor UDP-N-acetylmuramoyl-L-alanine (UMA).</text>
</comment>
<comment type="catalytic activity">
    <reaction evidence="1">
        <text>UDP-N-acetyl-alpha-D-muramoyl-L-alanine + D-glutamate + ATP = UDP-N-acetyl-alpha-D-muramoyl-L-alanyl-D-glutamate + ADP + phosphate + H(+)</text>
        <dbReference type="Rhea" id="RHEA:16429"/>
        <dbReference type="ChEBI" id="CHEBI:15378"/>
        <dbReference type="ChEBI" id="CHEBI:29986"/>
        <dbReference type="ChEBI" id="CHEBI:30616"/>
        <dbReference type="ChEBI" id="CHEBI:43474"/>
        <dbReference type="ChEBI" id="CHEBI:83898"/>
        <dbReference type="ChEBI" id="CHEBI:83900"/>
        <dbReference type="ChEBI" id="CHEBI:456216"/>
        <dbReference type="EC" id="6.3.2.9"/>
    </reaction>
</comment>
<comment type="pathway">
    <text evidence="1">Cell wall biogenesis; peptidoglycan biosynthesis.</text>
</comment>
<comment type="subcellular location">
    <subcellularLocation>
        <location evidence="1">Cytoplasm</location>
    </subcellularLocation>
</comment>
<comment type="similarity">
    <text evidence="1">Belongs to the MurCDEF family.</text>
</comment>
<name>MURD_NOVAD</name>
<protein>
    <recommendedName>
        <fullName evidence="1">UDP-N-acetylmuramoylalanine--D-glutamate ligase</fullName>
        <ecNumber evidence="1">6.3.2.9</ecNumber>
    </recommendedName>
    <alternativeName>
        <fullName evidence="1">D-glutamic acid-adding enzyme</fullName>
    </alternativeName>
    <alternativeName>
        <fullName evidence="1">UDP-N-acetylmuramoyl-L-alanyl-D-glutamate synthetase</fullName>
    </alternativeName>
</protein>
<dbReference type="EC" id="6.3.2.9" evidence="1"/>
<dbReference type="EMBL" id="CP000248">
    <property type="protein sequence ID" value="ABD25576.1"/>
    <property type="molecule type" value="Genomic_DNA"/>
</dbReference>
<dbReference type="RefSeq" id="WP_011444790.1">
    <property type="nucleotide sequence ID" value="NC_007794.1"/>
</dbReference>
<dbReference type="SMR" id="Q2G997"/>
<dbReference type="STRING" id="279238.Saro_1131"/>
<dbReference type="KEGG" id="nar:Saro_1131"/>
<dbReference type="eggNOG" id="COG0771">
    <property type="taxonomic scope" value="Bacteria"/>
</dbReference>
<dbReference type="HOGENOM" id="CLU_032540_3_0_5"/>
<dbReference type="UniPathway" id="UPA00219"/>
<dbReference type="Proteomes" id="UP000009134">
    <property type="component" value="Chromosome"/>
</dbReference>
<dbReference type="GO" id="GO:0005737">
    <property type="term" value="C:cytoplasm"/>
    <property type="evidence" value="ECO:0007669"/>
    <property type="project" value="UniProtKB-SubCell"/>
</dbReference>
<dbReference type="GO" id="GO:0005524">
    <property type="term" value="F:ATP binding"/>
    <property type="evidence" value="ECO:0007669"/>
    <property type="project" value="UniProtKB-UniRule"/>
</dbReference>
<dbReference type="GO" id="GO:0008764">
    <property type="term" value="F:UDP-N-acetylmuramoylalanine-D-glutamate ligase activity"/>
    <property type="evidence" value="ECO:0007669"/>
    <property type="project" value="UniProtKB-UniRule"/>
</dbReference>
<dbReference type="GO" id="GO:0051301">
    <property type="term" value="P:cell division"/>
    <property type="evidence" value="ECO:0007669"/>
    <property type="project" value="UniProtKB-KW"/>
</dbReference>
<dbReference type="GO" id="GO:0071555">
    <property type="term" value="P:cell wall organization"/>
    <property type="evidence" value="ECO:0007669"/>
    <property type="project" value="UniProtKB-KW"/>
</dbReference>
<dbReference type="GO" id="GO:0009252">
    <property type="term" value="P:peptidoglycan biosynthetic process"/>
    <property type="evidence" value="ECO:0007669"/>
    <property type="project" value="UniProtKB-UniRule"/>
</dbReference>
<dbReference type="GO" id="GO:0008360">
    <property type="term" value="P:regulation of cell shape"/>
    <property type="evidence" value="ECO:0007669"/>
    <property type="project" value="UniProtKB-KW"/>
</dbReference>
<dbReference type="Gene3D" id="3.90.190.20">
    <property type="entry name" value="Mur ligase, C-terminal domain"/>
    <property type="match status" value="1"/>
</dbReference>
<dbReference type="Gene3D" id="3.40.1190.10">
    <property type="entry name" value="Mur-like, catalytic domain"/>
    <property type="match status" value="1"/>
</dbReference>
<dbReference type="Gene3D" id="3.40.50.720">
    <property type="entry name" value="NAD(P)-binding Rossmann-like Domain"/>
    <property type="match status" value="1"/>
</dbReference>
<dbReference type="HAMAP" id="MF_00639">
    <property type="entry name" value="MurD"/>
    <property type="match status" value="1"/>
</dbReference>
<dbReference type="InterPro" id="IPR036565">
    <property type="entry name" value="Mur-like_cat_sf"/>
</dbReference>
<dbReference type="InterPro" id="IPR004101">
    <property type="entry name" value="Mur_ligase_C"/>
</dbReference>
<dbReference type="InterPro" id="IPR036615">
    <property type="entry name" value="Mur_ligase_C_dom_sf"/>
</dbReference>
<dbReference type="InterPro" id="IPR013221">
    <property type="entry name" value="Mur_ligase_cen"/>
</dbReference>
<dbReference type="InterPro" id="IPR005762">
    <property type="entry name" value="MurD"/>
</dbReference>
<dbReference type="NCBIfam" id="TIGR01087">
    <property type="entry name" value="murD"/>
    <property type="match status" value="1"/>
</dbReference>
<dbReference type="PANTHER" id="PTHR43692">
    <property type="entry name" value="UDP-N-ACETYLMURAMOYLALANINE--D-GLUTAMATE LIGASE"/>
    <property type="match status" value="1"/>
</dbReference>
<dbReference type="PANTHER" id="PTHR43692:SF1">
    <property type="entry name" value="UDP-N-ACETYLMURAMOYLALANINE--D-GLUTAMATE LIGASE"/>
    <property type="match status" value="1"/>
</dbReference>
<dbReference type="Pfam" id="PF02875">
    <property type="entry name" value="Mur_ligase_C"/>
    <property type="match status" value="1"/>
</dbReference>
<dbReference type="Pfam" id="PF08245">
    <property type="entry name" value="Mur_ligase_M"/>
    <property type="match status" value="1"/>
</dbReference>
<dbReference type="Pfam" id="PF21799">
    <property type="entry name" value="MurD-like_N"/>
    <property type="match status" value="1"/>
</dbReference>
<dbReference type="SUPFAM" id="SSF51984">
    <property type="entry name" value="MurCD N-terminal domain"/>
    <property type="match status" value="1"/>
</dbReference>
<dbReference type="SUPFAM" id="SSF53623">
    <property type="entry name" value="MurD-like peptide ligases, catalytic domain"/>
    <property type="match status" value="1"/>
</dbReference>
<dbReference type="SUPFAM" id="SSF53244">
    <property type="entry name" value="MurD-like peptide ligases, peptide-binding domain"/>
    <property type="match status" value="1"/>
</dbReference>
<reference key="1">
    <citation type="submission" date="2006-01" db="EMBL/GenBank/DDBJ databases">
        <title>Complete sequence of Novosphingobium aromaticivorans DSM 12444.</title>
        <authorList>
            <consortium name="US DOE Joint Genome Institute"/>
            <person name="Copeland A."/>
            <person name="Lucas S."/>
            <person name="Lapidus A."/>
            <person name="Barry K."/>
            <person name="Detter J.C."/>
            <person name="Glavina T."/>
            <person name="Hammon N."/>
            <person name="Israni S."/>
            <person name="Pitluck S."/>
            <person name="Chain P."/>
            <person name="Malfatti S."/>
            <person name="Shin M."/>
            <person name="Vergez L."/>
            <person name="Schmutz J."/>
            <person name="Larimer F."/>
            <person name="Land M."/>
            <person name="Kyrpides N."/>
            <person name="Ivanova N."/>
            <person name="Fredrickson J."/>
            <person name="Balkwill D."/>
            <person name="Romine M.F."/>
            <person name="Richardson P."/>
        </authorList>
    </citation>
    <scope>NUCLEOTIDE SEQUENCE [LARGE SCALE GENOMIC DNA]</scope>
    <source>
        <strain>ATCC 700278 / DSM 12444 / CCUG 56034 / CIP 105152 / NBRC 16084 / F199</strain>
    </source>
</reference>
<proteinExistence type="inferred from homology"/>
<evidence type="ECO:0000255" key="1">
    <source>
        <dbReference type="HAMAP-Rule" id="MF_00639"/>
    </source>
</evidence>
<organism>
    <name type="scientific">Novosphingobium aromaticivorans (strain ATCC 700278 / DSM 12444 / CCUG 56034 / CIP 105152 / NBRC 16084 / F199)</name>
    <dbReference type="NCBI Taxonomy" id="279238"/>
    <lineage>
        <taxon>Bacteria</taxon>
        <taxon>Pseudomonadati</taxon>
        <taxon>Pseudomonadota</taxon>
        <taxon>Alphaproteobacteria</taxon>
        <taxon>Sphingomonadales</taxon>
        <taxon>Sphingomonadaceae</taxon>
        <taxon>Novosphingobium</taxon>
    </lineage>
</organism>
<sequence>MIVSRAFAGKRYAVLGLARSGLASVESLLAGGADVTVWDNREEPRSAFEGSCTIADPLSIDLTGFAGVVVSPGVPLNRHPIADHARAAGVPVIGDIELFAQARADLPPHRVVGITGTNGKSTTTMLVHHICAAAGLPARLGGNIGLPILGQEPLPEGGVYVLELSSYQIDLTQSLACDVAALINLSPDHLDRYDGFAGYAASKARLFAMQRADQHAVFGCGDEHTLEIAREASATHDTGFVHVVQPSALHGQLEWPSLQGPHNLQNAAIAVEIARQLGIAEDIWRSALASFVGLPHRMERVAEANGVLFVNDSKATNPASTAPALGAYPRIHWILGGLPKSDNLDECAPYFDHVVAAYTIGEAGPRFAEILEPVMPVTRSEMLCDAVRQAMEAAQPGDVVMLSPACASFDQFRDFEARGDSFRQIVEALIEDREAPCPDGTPT</sequence>
<feature type="chain" id="PRO_0000257210" description="UDP-N-acetylmuramoylalanine--D-glutamate ligase">
    <location>
        <begin position="1"/>
        <end position="443"/>
    </location>
</feature>
<feature type="binding site" evidence="1">
    <location>
        <begin position="116"/>
        <end position="122"/>
    </location>
    <ligand>
        <name>ATP</name>
        <dbReference type="ChEBI" id="CHEBI:30616"/>
    </ligand>
</feature>